<proteinExistence type="inferred from homology"/>
<evidence type="ECO:0000255" key="1">
    <source>
        <dbReference type="HAMAP-Rule" id="MF_01852"/>
    </source>
</evidence>
<comment type="function">
    <text evidence="1">Required for the formation of a threonylcarbamoyl group on adenosine at position 37 (t(6)A37) in tRNAs that read codons beginning with adenine. Catalyzes the conversion of L-threonine, HCO(3)(-)/CO(2) and ATP to give threonylcarbamoyl-AMP (TC-AMP) as the acyladenylate intermediate, with the release of diphosphate.</text>
</comment>
<comment type="catalytic activity">
    <reaction evidence="1">
        <text>L-threonine + hydrogencarbonate + ATP = L-threonylcarbamoyladenylate + diphosphate + H2O</text>
        <dbReference type="Rhea" id="RHEA:36407"/>
        <dbReference type="ChEBI" id="CHEBI:15377"/>
        <dbReference type="ChEBI" id="CHEBI:17544"/>
        <dbReference type="ChEBI" id="CHEBI:30616"/>
        <dbReference type="ChEBI" id="CHEBI:33019"/>
        <dbReference type="ChEBI" id="CHEBI:57926"/>
        <dbReference type="ChEBI" id="CHEBI:73682"/>
        <dbReference type="EC" id="2.7.7.87"/>
    </reaction>
</comment>
<comment type="subcellular location">
    <subcellularLocation>
        <location evidence="1">Cytoplasm</location>
    </subcellularLocation>
</comment>
<comment type="similarity">
    <text evidence="1">Belongs to the SUA5 family. TsaC subfamily.</text>
</comment>
<feature type="chain" id="PRO_0000352978" description="Threonylcarbamoyl-AMP synthase">
    <location>
        <begin position="1"/>
        <end position="188"/>
    </location>
</feature>
<feature type="domain" description="YrdC-like" evidence="1">
    <location>
        <begin position="3"/>
        <end position="188"/>
    </location>
</feature>
<reference key="1">
    <citation type="submission" date="2006-03" db="EMBL/GenBank/DDBJ databases">
        <title>Complete sequence of Shewanella denitrificans OS217.</title>
        <authorList>
            <consortium name="US DOE Joint Genome Institute"/>
            <person name="Copeland A."/>
            <person name="Lucas S."/>
            <person name="Lapidus A."/>
            <person name="Barry K."/>
            <person name="Detter J.C."/>
            <person name="Glavina del Rio T."/>
            <person name="Hammon N."/>
            <person name="Israni S."/>
            <person name="Dalin E."/>
            <person name="Tice H."/>
            <person name="Pitluck S."/>
            <person name="Brettin T."/>
            <person name="Bruce D."/>
            <person name="Han C."/>
            <person name="Tapia R."/>
            <person name="Gilna P."/>
            <person name="Kiss H."/>
            <person name="Schmutz J."/>
            <person name="Larimer F."/>
            <person name="Land M."/>
            <person name="Hauser L."/>
            <person name="Kyrpides N."/>
            <person name="Lykidis A."/>
            <person name="Richardson P."/>
        </authorList>
    </citation>
    <scope>NUCLEOTIDE SEQUENCE [LARGE SCALE GENOMIC DNA]</scope>
    <source>
        <strain>OS217 / ATCC BAA-1090 / DSM 15013</strain>
    </source>
</reference>
<organism>
    <name type="scientific">Shewanella denitrificans (strain OS217 / ATCC BAA-1090 / DSM 15013)</name>
    <dbReference type="NCBI Taxonomy" id="318161"/>
    <lineage>
        <taxon>Bacteria</taxon>
        <taxon>Pseudomonadati</taxon>
        <taxon>Pseudomonadota</taxon>
        <taxon>Gammaproteobacteria</taxon>
        <taxon>Alteromonadales</taxon>
        <taxon>Shewanellaceae</taxon>
        <taxon>Shewanella</taxon>
    </lineage>
</organism>
<gene>
    <name evidence="1" type="primary">tsaC</name>
    <name type="synonym">rimN</name>
    <name type="ordered locus">Sden_0029</name>
</gene>
<name>TSAC_SHEDO</name>
<accession>Q12TA0</accession>
<keyword id="KW-0067">ATP-binding</keyword>
<keyword id="KW-0963">Cytoplasm</keyword>
<keyword id="KW-0547">Nucleotide-binding</keyword>
<keyword id="KW-0548">Nucleotidyltransferase</keyword>
<keyword id="KW-1185">Reference proteome</keyword>
<keyword id="KW-0808">Transferase</keyword>
<keyword id="KW-0819">tRNA processing</keyword>
<dbReference type="EC" id="2.7.7.87" evidence="1"/>
<dbReference type="EMBL" id="CP000302">
    <property type="protein sequence ID" value="ABE53326.1"/>
    <property type="molecule type" value="Genomic_DNA"/>
</dbReference>
<dbReference type="RefSeq" id="WP_011494495.1">
    <property type="nucleotide sequence ID" value="NC_007954.1"/>
</dbReference>
<dbReference type="SMR" id="Q12TA0"/>
<dbReference type="STRING" id="318161.Sden_0029"/>
<dbReference type="KEGG" id="sdn:Sden_0029"/>
<dbReference type="eggNOG" id="COG0009">
    <property type="taxonomic scope" value="Bacteria"/>
</dbReference>
<dbReference type="HOGENOM" id="CLU_031397_6_0_6"/>
<dbReference type="OrthoDB" id="9814580at2"/>
<dbReference type="Proteomes" id="UP000001982">
    <property type="component" value="Chromosome"/>
</dbReference>
<dbReference type="GO" id="GO:0005737">
    <property type="term" value="C:cytoplasm"/>
    <property type="evidence" value="ECO:0007669"/>
    <property type="project" value="UniProtKB-SubCell"/>
</dbReference>
<dbReference type="GO" id="GO:0005524">
    <property type="term" value="F:ATP binding"/>
    <property type="evidence" value="ECO:0007669"/>
    <property type="project" value="UniProtKB-UniRule"/>
</dbReference>
<dbReference type="GO" id="GO:0003725">
    <property type="term" value="F:double-stranded RNA binding"/>
    <property type="evidence" value="ECO:0007669"/>
    <property type="project" value="InterPro"/>
</dbReference>
<dbReference type="GO" id="GO:0061710">
    <property type="term" value="F:L-threonylcarbamoyladenylate synthase"/>
    <property type="evidence" value="ECO:0007669"/>
    <property type="project" value="UniProtKB-EC"/>
</dbReference>
<dbReference type="GO" id="GO:0000049">
    <property type="term" value="F:tRNA binding"/>
    <property type="evidence" value="ECO:0007669"/>
    <property type="project" value="TreeGrafter"/>
</dbReference>
<dbReference type="GO" id="GO:0006450">
    <property type="term" value="P:regulation of translational fidelity"/>
    <property type="evidence" value="ECO:0007669"/>
    <property type="project" value="TreeGrafter"/>
</dbReference>
<dbReference type="GO" id="GO:0002949">
    <property type="term" value="P:tRNA threonylcarbamoyladenosine modification"/>
    <property type="evidence" value="ECO:0007669"/>
    <property type="project" value="UniProtKB-UniRule"/>
</dbReference>
<dbReference type="FunFam" id="3.90.870.10:FF:000004">
    <property type="entry name" value="Threonylcarbamoyl-AMP synthase"/>
    <property type="match status" value="1"/>
</dbReference>
<dbReference type="Gene3D" id="3.90.870.10">
    <property type="entry name" value="DHBP synthase"/>
    <property type="match status" value="1"/>
</dbReference>
<dbReference type="HAMAP" id="MF_01852">
    <property type="entry name" value="TsaC"/>
    <property type="match status" value="1"/>
</dbReference>
<dbReference type="InterPro" id="IPR017945">
    <property type="entry name" value="DHBP_synth_RibB-like_a/b_dom"/>
</dbReference>
<dbReference type="InterPro" id="IPR006070">
    <property type="entry name" value="Sua5-like_dom"/>
</dbReference>
<dbReference type="InterPro" id="IPR023535">
    <property type="entry name" value="TC-AMP_synthase"/>
</dbReference>
<dbReference type="InterPro" id="IPR050156">
    <property type="entry name" value="TC-AMP_synthase_SUA5"/>
</dbReference>
<dbReference type="NCBIfam" id="TIGR00057">
    <property type="entry name" value="L-threonylcarbamoyladenylate synthase"/>
    <property type="match status" value="1"/>
</dbReference>
<dbReference type="PANTHER" id="PTHR17490">
    <property type="entry name" value="SUA5"/>
    <property type="match status" value="1"/>
</dbReference>
<dbReference type="PANTHER" id="PTHR17490:SF18">
    <property type="entry name" value="THREONYLCARBAMOYL-AMP SYNTHASE"/>
    <property type="match status" value="1"/>
</dbReference>
<dbReference type="Pfam" id="PF01300">
    <property type="entry name" value="Sua5_yciO_yrdC"/>
    <property type="match status" value="1"/>
</dbReference>
<dbReference type="SUPFAM" id="SSF55821">
    <property type="entry name" value="YrdC/RibB"/>
    <property type="match status" value="1"/>
</dbReference>
<dbReference type="PROSITE" id="PS51163">
    <property type="entry name" value="YRDC"/>
    <property type="match status" value="1"/>
</dbReference>
<sequence length="188" mass="20317">MLQLSSTQVTPVIAQGGVIAYPTEAVYGLGCDPDNDQAIEKLLAVKQRPWQKGLILVASSFEQLLPYVDVAQLTQAQLDFAHSKWPGPFTFVMPVKSHVSNKLRGEFDSIAVRVSAHPIVRELCDSLNKPLVSTSANLAGQDPVLTSRQILTDFADKIDALVLGDLGQQAQPSTIIDARSGLVLRNGQ</sequence>
<protein>
    <recommendedName>
        <fullName evidence="1">Threonylcarbamoyl-AMP synthase</fullName>
        <shortName evidence="1">TC-AMP synthase</shortName>
        <ecNumber evidence="1">2.7.7.87</ecNumber>
    </recommendedName>
    <alternativeName>
        <fullName evidence="1">L-threonylcarbamoyladenylate synthase</fullName>
    </alternativeName>
    <alternativeName>
        <fullName evidence="1">t(6)A37 threonylcarbamoyladenosine biosynthesis protein TsaC</fullName>
    </alternativeName>
    <alternativeName>
        <fullName evidence="1">tRNA threonylcarbamoyladenosine biosynthesis protein TsaC</fullName>
    </alternativeName>
</protein>